<accession>A3KMH1</accession>
<accession>O60310</accession>
<accession>Q5JTP6</accession>
<accession>Q5VW08</accession>
<accession>Q7Z6I9</accession>
<accession>Q86YC9</accession>
<accession>Q8N3E4</accession>
<evidence type="ECO:0000250" key="1">
    <source>
        <dbReference type="UniProtKB" id="Q8CC88"/>
    </source>
</evidence>
<evidence type="ECO:0000255" key="2"/>
<evidence type="ECO:0000255" key="3">
    <source>
        <dbReference type="PROSITE-ProRule" id="PRU00219"/>
    </source>
</evidence>
<evidence type="ECO:0000256" key="4">
    <source>
        <dbReference type="SAM" id="MobiDB-lite"/>
    </source>
</evidence>
<evidence type="ECO:0000269" key="5">
    <source>
    </source>
</evidence>
<evidence type="ECO:0000269" key="6">
    <source>
    </source>
</evidence>
<evidence type="ECO:0000269" key="7">
    <source>
    </source>
</evidence>
<evidence type="ECO:0000303" key="8">
    <source>
    </source>
</evidence>
<evidence type="ECO:0000303" key="9">
    <source>
    </source>
</evidence>
<evidence type="ECO:0000303" key="10">
    <source>
    </source>
</evidence>
<evidence type="ECO:0000305" key="11"/>
<evidence type="ECO:0000312" key="12">
    <source>
        <dbReference type="HGNC" id="HGNC:29071"/>
    </source>
</evidence>
<protein>
    <recommendedName>
        <fullName evidence="11">von Willebrand factor A domain-containing protein 8</fullName>
    </recommendedName>
    <alternativeName>
        <fullName evidence="10">PEX7-binding protein 2</fullName>
        <shortName evidence="10">P7BP2</shortName>
    </alternativeName>
</protein>
<gene>
    <name evidence="12" type="primary">VWA8</name>
    <name type="synonym">KIAA0564</name>
</gene>
<proteinExistence type="evidence at protein level"/>
<reference key="1">
    <citation type="journal article" date="2004" name="Nature">
        <title>The DNA sequence and analysis of human chromosome 13.</title>
        <authorList>
            <person name="Dunham A."/>
            <person name="Matthews L.H."/>
            <person name="Burton J."/>
            <person name="Ashurst J.L."/>
            <person name="Howe K.L."/>
            <person name="Ashcroft K.J."/>
            <person name="Beare D.M."/>
            <person name="Burford D.C."/>
            <person name="Hunt S.E."/>
            <person name="Griffiths-Jones S."/>
            <person name="Jones M.C."/>
            <person name="Keenan S.J."/>
            <person name="Oliver K."/>
            <person name="Scott C.E."/>
            <person name="Ainscough R."/>
            <person name="Almeida J.P."/>
            <person name="Ambrose K.D."/>
            <person name="Andrews D.T."/>
            <person name="Ashwell R.I.S."/>
            <person name="Babbage A.K."/>
            <person name="Bagguley C.L."/>
            <person name="Bailey J."/>
            <person name="Bannerjee R."/>
            <person name="Barlow K.F."/>
            <person name="Bates K."/>
            <person name="Beasley H."/>
            <person name="Bird C.P."/>
            <person name="Bray-Allen S."/>
            <person name="Brown A.J."/>
            <person name="Brown J.Y."/>
            <person name="Burrill W."/>
            <person name="Carder C."/>
            <person name="Carter N.P."/>
            <person name="Chapman J.C."/>
            <person name="Clamp M.E."/>
            <person name="Clark S.Y."/>
            <person name="Clarke G."/>
            <person name="Clee C.M."/>
            <person name="Clegg S.C."/>
            <person name="Cobley V."/>
            <person name="Collins J.E."/>
            <person name="Corby N."/>
            <person name="Coville G.J."/>
            <person name="Deloukas P."/>
            <person name="Dhami P."/>
            <person name="Dunham I."/>
            <person name="Dunn M."/>
            <person name="Earthrowl M.E."/>
            <person name="Ellington A.G."/>
            <person name="Faulkner L."/>
            <person name="Frankish A.G."/>
            <person name="Frankland J."/>
            <person name="French L."/>
            <person name="Garner P."/>
            <person name="Garnett J."/>
            <person name="Gilbert J.G.R."/>
            <person name="Gilson C.J."/>
            <person name="Ghori J."/>
            <person name="Grafham D.V."/>
            <person name="Gribble S.M."/>
            <person name="Griffiths C."/>
            <person name="Hall R.E."/>
            <person name="Hammond S."/>
            <person name="Harley J.L."/>
            <person name="Hart E.A."/>
            <person name="Heath P.D."/>
            <person name="Howden P.J."/>
            <person name="Huckle E.J."/>
            <person name="Hunt P.J."/>
            <person name="Hunt A.R."/>
            <person name="Johnson C."/>
            <person name="Johnson D."/>
            <person name="Kay M."/>
            <person name="Kimberley A.M."/>
            <person name="King A."/>
            <person name="Laird G.K."/>
            <person name="Langford C.J."/>
            <person name="Lawlor S."/>
            <person name="Leongamornlert D.A."/>
            <person name="Lloyd D.M."/>
            <person name="Lloyd C."/>
            <person name="Loveland J.E."/>
            <person name="Lovell J."/>
            <person name="Martin S."/>
            <person name="Mashreghi-Mohammadi M."/>
            <person name="McLaren S.J."/>
            <person name="McMurray A."/>
            <person name="Milne S."/>
            <person name="Moore M.J.F."/>
            <person name="Nickerson T."/>
            <person name="Palmer S.A."/>
            <person name="Pearce A.V."/>
            <person name="Peck A.I."/>
            <person name="Pelan S."/>
            <person name="Phillimore B."/>
            <person name="Porter K.M."/>
            <person name="Rice C.M."/>
            <person name="Searle S."/>
            <person name="Sehra H.K."/>
            <person name="Shownkeen R."/>
            <person name="Skuce C.D."/>
            <person name="Smith M."/>
            <person name="Steward C.A."/>
            <person name="Sycamore N."/>
            <person name="Tester J."/>
            <person name="Thomas D.W."/>
            <person name="Tracey A."/>
            <person name="Tromans A."/>
            <person name="Tubby B."/>
            <person name="Wall M."/>
            <person name="Wallis J.M."/>
            <person name="West A.P."/>
            <person name="Whitehead S.L."/>
            <person name="Willey D.L."/>
            <person name="Wilming L."/>
            <person name="Wray P.W."/>
            <person name="Wright M.W."/>
            <person name="Young L."/>
            <person name="Coulson A."/>
            <person name="Durbin R.M."/>
            <person name="Hubbard T."/>
            <person name="Sulston J.E."/>
            <person name="Beck S."/>
            <person name="Bentley D.R."/>
            <person name="Rogers J."/>
            <person name="Ross M.T."/>
        </authorList>
    </citation>
    <scope>NUCLEOTIDE SEQUENCE [LARGE SCALE GENOMIC DNA]</scope>
</reference>
<reference key="2">
    <citation type="journal article" date="2004" name="Genome Res.">
        <title>The status, quality, and expansion of the NIH full-length cDNA project: the Mammalian Gene Collection (MGC).</title>
        <authorList>
            <consortium name="The MGC Project Team"/>
        </authorList>
    </citation>
    <scope>NUCLEOTIDE SEQUENCE [LARGE SCALE MRNA] (ISOFORM 2)</scope>
    <scope>NUCLEOTIDE SEQUENCE [LARGE SCALE MRNA] (ISOFORM 3)</scope>
    <source>
        <tissue>Blood</tissue>
    </source>
</reference>
<reference key="3">
    <citation type="journal article" date="2007" name="BMC Genomics">
        <title>The full-ORF clone resource of the German cDNA consortium.</title>
        <authorList>
            <person name="Bechtel S."/>
            <person name="Rosenfelder H."/>
            <person name="Duda A."/>
            <person name="Schmidt C.P."/>
            <person name="Ernst U."/>
            <person name="Wellenreuther R."/>
            <person name="Mehrle A."/>
            <person name="Schuster C."/>
            <person name="Bahr A."/>
            <person name="Bloecker H."/>
            <person name="Heubner D."/>
            <person name="Hoerlein A."/>
            <person name="Michel G."/>
            <person name="Wedler H."/>
            <person name="Koehrer K."/>
            <person name="Ottenwaelder B."/>
            <person name="Poustka A."/>
            <person name="Wiemann S."/>
            <person name="Schupp I."/>
        </authorList>
    </citation>
    <scope>NUCLEOTIDE SEQUENCE [LARGE SCALE MRNA] OF 295-1905 (ISOFORM 2)</scope>
    <scope>VARIANT THR-383</scope>
    <source>
        <tissue>Amygdala</tissue>
    </source>
</reference>
<reference key="4">
    <citation type="journal article" date="1998" name="DNA Res.">
        <title>Prediction of the coding sequences of unidentified human genes. IX. The complete sequences of 100 new cDNA clones from brain which can code for large proteins in vitro.</title>
        <authorList>
            <person name="Nagase T."/>
            <person name="Ishikawa K."/>
            <person name="Miyajima N."/>
            <person name="Tanaka A."/>
            <person name="Kotani H."/>
            <person name="Nomura N."/>
            <person name="Ohara O."/>
        </authorList>
    </citation>
    <scope>NUCLEOTIDE SEQUENCE [LARGE SCALE MRNA] OF 465-1905</scope>
    <source>
        <tissue>Brain</tissue>
    </source>
</reference>
<reference key="5">
    <citation type="journal article" date="2011" name="BMC Syst. Biol.">
        <title>Initial characterization of the human central proteome.</title>
        <authorList>
            <person name="Burkard T.R."/>
            <person name="Planyavsky M."/>
            <person name="Kaupe I."/>
            <person name="Breitwieser F.P."/>
            <person name="Buerckstuemmer T."/>
            <person name="Bennett K.L."/>
            <person name="Superti-Furga G."/>
            <person name="Colinge J."/>
        </authorList>
    </citation>
    <scope>IDENTIFICATION BY MASS SPECTROMETRY [LARGE SCALE ANALYSIS]</scope>
</reference>
<reference key="6">
    <citation type="journal article" date="2014" name="J. Proteomics">
        <title>An enzyme assisted RP-RPLC approach for in-depth analysis of human liver phosphoproteome.</title>
        <authorList>
            <person name="Bian Y."/>
            <person name="Song C."/>
            <person name="Cheng K."/>
            <person name="Dong M."/>
            <person name="Wang F."/>
            <person name="Huang J."/>
            <person name="Sun D."/>
            <person name="Wang L."/>
            <person name="Ye M."/>
            <person name="Zou H."/>
        </authorList>
    </citation>
    <scope>IDENTIFICATION BY MASS SPECTROMETRY [LARGE SCALE ANALYSIS]</scope>
    <source>
        <tissue>Liver</tissue>
    </source>
</reference>
<reference key="7">
    <citation type="journal article" date="2018" name="J. Biochem.">
        <title>A newly isolated Pex7-binding, atypical PTS2 protein P7BP2 is a novel dynein-type AAA+ protein.</title>
        <authorList>
            <person name="Niwa H."/>
            <person name="Miyauchi-Nanri Y."/>
            <person name="Okumoto K."/>
            <person name="Mukai S."/>
            <person name="Noi K."/>
            <person name="Ogura T."/>
            <person name="Fujiki Y."/>
        </authorList>
    </citation>
    <scope>SUBUNIT</scope>
    <scope>SUBCELLULAR LOCATION</scope>
    <scope>INTERACTION WITH PEX7 AND PEX5</scope>
    <scope>ALTERNATIVE SPLICING</scope>
</reference>
<reference key="8">
    <citation type="journal article" date="2023" name="J. Med. Genet.">
        <title>Mutations in VWA8 cause autosomal-dominant retinitis pigmentosa via aberrant mitophagy activation.</title>
        <authorList>
            <person name="Kong L."/>
            <person name="Chu G."/>
            <person name="Ma W."/>
            <person name="Liang J."/>
            <person name="Liu D."/>
            <person name="Liu Q."/>
            <person name="Wei X."/>
            <person name="Jia S."/>
            <person name="Gu H."/>
            <person name="He Y."/>
            <person name="Luo W."/>
            <person name="Cao S."/>
            <person name="Zhou X."/>
            <person name="He R."/>
            <person name="Yuan Z."/>
        </authorList>
    </citation>
    <scope>INVOLVEMENT IN RP97</scope>
    <scope>TISSUE SPECIFICITY</scope>
    <scope>VARIANTS RP97 ARG-1024 AND 1520-ARG--VAL-1905 DEL</scope>
</reference>
<organism>
    <name type="scientific">Homo sapiens</name>
    <name type="common">Human</name>
    <dbReference type="NCBI Taxonomy" id="9606"/>
    <lineage>
        <taxon>Eukaryota</taxon>
        <taxon>Metazoa</taxon>
        <taxon>Chordata</taxon>
        <taxon>Craniata</taxon>
        <taxon>Vertebrata</taxon>
        <taxon>Euteleostomi</taxon>
        <taxon>Mammalia</taxon>
        <taxon>Eutheria</taxon>
        <taxon>Euarchontoglires</taxon>
        <taxon>Primates</taxon>
        <taxon>Haplorrhini</taxon>
        <taxon>Catarrhini</taxon>
        <taxon>Hominidae</taxon>
        <taxon>Homo</taxon>
    </lineage>
</organism>
<feature type="transit peptide" description="Mitochondrion" evidence="2">
    <location>
        <begin position="1"/>
        <end position="28"/>
    </location>
</feature>
<feature type="chain" id="PRO_0000342685" description="von Willebrand factor A domain-containing protein 8" evidence="2">
    <location>
        <begin position="29"/>
        <end position="1905"/>
    </location>
</feature>
<feature type="domain" description="VWFA" evidence="3">
    <location>
        <begin position="1714"/>
        <end position="1896"/>
    </location>
</feature>
<feature type="region of interest" description="Interaction with PEX7" evidence="6">
    <location>
        <begin position="1"/>
        <end position="261"/>
    </location>
</feature>
<feature type="region of interest" description="Disordered" evidence="4">
    <location>
        <begin position="1542"/>
        <end position="1563"/>
    </location>
</feature>
<feature type="compositionally biased region" description="Basic and acidic residues" evidence="4">
    <location>
        <begin position="1543"/>
        <end position="1560"/>
    </location>
</feature>
<feature type="binding site" evidence="2">
    <location>
        <begin position="447"/>
        <end position="454"/>
    </location>
    <ligand>
        <name>ATP</name>
        <dbReference type="ChEBI" id="CHEBI:30616"/>
    </ligand>
</feature>
<feature type="glycosylation site" description="N-linked (GlcNAc...) asparagine" evidence="2">
    <location>
        <position position="284"/>
    </location>
</feature>
<feature type="glycosylation site" description="N-linked (GlcNAc...) asparagine" evidence="2">
    <location>
        <position position="855"/>
    </location>
</feature>
<feature type="glycosylation site" description="N-linked (GlcNAc...) asparagine" evidence="2">
    <location>
        <position position="1096"/>
    </location>
</feature>
<feature type="glycosylation site" description="N-linked (GlcNAc...) asparagine" evidence="2">
    <location>
        <position position="1142"/>
    </location>
</feature>
<feature type="glycosylation site" description="N-linked (GlcNAc...) asparagine" evidence="2">
    <location>
        <position position="1833"/>
    </location>
</feature>
<feature type="splice variant" id="VSP_061575" description="In isoform 3.">
    <location>
        <begin position="1"/>
        <end position="96"/>
    </location>
</feature>
<feature type="splice variant" id="VSP_034533" description="In isoform 2." evidence="8 9">
    <location>
        <begin position="1040"/>
        <end position="1905"/>
    </location>
</feature>
<feature type="sequence variant" id="VAR_044337" description="In dbSNP:rs9562362.">
    <original>R</original>
    <variation>H</variation>
    <location>
        <position position="165"/>
    </location>
</feature>
<feature type="sequence variant" id="VAR_044338" description="In dbSNP:rs3742262." evidence="5">
    <original>M</original>
    <variation>T</variation>
    <location>
        <position position="383"/>
    </location>
</feature>
<feature type="sequence variant" id="VAR_044339" description="In dbSNP:rs17062601.">
    <original>G</original>
    <variation>R</variation>
    <location>
        <position position="408"/>
    </location>
</feature>
<feature type="sequence variant" id="VAR_044340" description="In dbSNP:rs9562353.">
    <original>R</original>
    <variation>G</variation>
    <location>
        <position position="660"/>
    </location>
</feature>
<feature type="sequence variant" id="VAR_061239" description="In dbSNP:rs41288291.">
    <original>R</original>
    <variation>K</variation>
    <location>
        <position position="898"/>
    </location>
</feature>
<feature type="sequence variant" id="VAR_088634" description="In RP97; associated in cis with 1520-R--V-1905 del; likely pathogenic; dbSNP:rs371770462." evidence="7">
    <original>G</original>
    <variation>R</variation>
    <location>
        <position position="1024"/>
    </location>
</feature>
<feature type="sequence variant" id="VAR_049512" description="In dbSNP:rs2274810.">
    <original>E</original>
    <variation>K</variation>
    <location>
        <position position="1300"/>
    </location>
</feature>
<feature type="sequence variant" id="VAR_088635" description="In RP97; associated in cis with R-1024; likely pathogenic." evidence="7">
    <location>
        <begin position="1520"/>
        <end position="1905"/>
    </location>
</feature>
<sequence length="1905" mass="214824">MQSRLLLLGAPGGHGGPASRRMRLLLRQVVQRRPGGDRQRPEVRLLHAGSGADTGDTVNIGDVSYKLKIPKNPELVPQNYISDSLAQSVVQHLRWIMQKDLLGQDVFLIGPPGPLRRSIAMQYLELTKREVEYIALSRDTTETDLKQRREIRAGTAFYIDQCAVRAATEGRTLILEGLEKAERNVLPVLNNLLENREMQLEDGRFLMSAERYDKLLRDHTKKELDSWKIVRVSENFRVIALGLPVPRYSGNPLDPPLRSRFQARDIYYLPFKDQLKLLYSIGANVSAEKVSQLLSFATTLCSQESSTLGLPDFPLDSLAAAVQILDSFPMMPIKHAIQWLYPYSILLGHEGKMAVEGVLKRFELQDSGSSLLPKEIVKVEKMMENHVSQASVTIRIADKEVTIKVPAGTRLLSQPCASDRFIQTLSHKQLQAEMMQSHMVKDICLIGGKGCGKTVIAKNFADTLGYNIEPIMLYQDMTARDLLQQRYTLPNGDTAWRSSPLVNAALEGKLVLLDGIHRVNAGTLAVLQRLIHDRELSLYDGSRLLREDRYMRLKEELQLSDEQLQKRSIFPIHPSFRIIALAEPPVIGSTAHQWLGPEFLTMFFFHYMKPLVKSEEIQVIKEKVPNVPQEALDKLLSFTHKLRETQDPTAQSLAASLSTRQLLRISRRLSQYPNENLHSAVTKACLSRFLPSLARSALEKNLADATIEINTDDNLEPELKDYKCEVTSGTLRIGAVSAPIYNAHEKMKVPDVLFYDNIQHVIVMEDMLKDFLLGEHLLLVGNQGVGKNKIVDRFLHLLNRPREYIQLHRDTTVQTLTLQPSVKDGLIVYEDSPLVKAVKLGHILVVDEADKAPTNVTCILKTLVENGEMILADGRRIVANSANVNGRENVVVIHPDFRMIVLANRPGFPFLGNDFFGTLGDIFSCHAVDNPKPHSELEMLRQYGPNVPEPILQKLVAAFGELRSLADQGIINYPYSTREVVNIVKHLQKFPTEGLSSVVRNVFDFDSYNNDMREILINTLHKYGIPIGAKPTSVQLAKELTLPEQTFMGYWTIGQARSGMQKLLCPVETHHIDIKGPALINIQEYPIERHEERSLNFTEECASWRIPLDEINIICDIATSHENEQNTLYVVTCNPASLYFMNMTGKSGFFVDFFDIFPRTANGVWHPFVTVAPLGSPLKGQVVLHEQQSNVILLLDTTGRALHRLILPSEKFTSKKPFWWNKEEAETYKMCKEFSHKNWLVFYKEKGNSLTVLDVLEGRTHTISLPINLKTVFLVAEDKWLLVESKTNQKYLLTKPAHIESEGSGVCQLYVLKEEPPSTGFGVTQETEFSIPHKISSDQLSSEHLSSAVEQKIASPNRILSDEKNYATIVVGFPDLMSPSEVYSWKRPSSLHKRSGTDTSFYRGKKKRGTPKQSNCVTLLDTNQVVRILPPGEVPLKDIYPKDVTPPQTSGYIEVTDLQSKKLRYIPIPRSESLSPYTTWLSTISDTDALLAEWDKSGVVTVDMGGHIRLWETGLERLQRSLMEWRNMIGQDDRNMQITINRDSGEDVSSPKHGKEDPDNMPHVGGNTWAGGTGGRDTAGLGGKGGPYRLDAGHTVYQVSQAEKDAVPEEVKRAAREMGQRAFQQRLKEIQMSEYDAATYERFSGAVRRQVHSLRIILDNLQAKGKERQWLRHQATGELDDAKIIDGLTGEKAIYKRRGELEPQLGSPQQKPKRLRLVVDVSGSMYRFNRMDGRLERTMEAVCMVMEAFENYEEKFQYDIVGHSGDGYNIGLVPMNKIPKDNKQRLEILKTMHAHSQFCMSGDHTLEGTEHAIKEIVKEEADEYFVIVLSDANLSRYGIHPAKFAQILTRDPQVNAFAIFIGSLGDQATRLQRTLPAGRSFVAMDTKDIPQILQQIFTSTMLSSV</sequence>
<name>VWA8_HUMAN</name>
<dbReference type="EMBL" id="AL160252">
    <property type="status" value="NOT_ANNOTATED_CDS"/>
    <property type="molecule type" value="Genomic_DNA"/>
</dbReference>
<dbReference type="EMBL" id="AL161417">
    <property type="status" value="NOT_ANNOTATED_CDS"/>
    <property type="molecule type" value="Genomic_DNA"/>
</dbReference>
<dbReference type="EMBL" id="AL163544">
    <property type="status" value="NOT_ANNOTATED_CDS"/>
    <property type="molecule type" value="Genomic_DNA"/>
</dbReference>
<dbReference type="EMBL" id="AL354833">
    <property type="status" value="NOT_ANNOTATED_CDS"/>
    <property type="molecule type" value="Genomic_DNA"/>
</dbReference>
<dbReference type="EMBL" id="AL442203">
    <property type="status" value="NOT_ANNOTATED_CDS"/>
    <property type="molecule type" value="Genomic_DNA"/>
</dbReference>
<dbReference type="EMBL" id="BC042924">
    <property type="protein sequence ID" value="AAH42924.2"/>
    <property type="molecule type" value="mRNA"/>
</dbReference>
<dbReference type="EMBL" id="BC053674">
    <property type="protein sequence ID" value="AAH53674.2"/>
    <property type="molecule type" value="mRNA"/>
</dbReference>
<dbReference type="EMBL" id="BC131802">
    <property type="protein sequence ID" value="AAI31803.1"/>
    <property type="status" value="ALT_INIT"/>
    <property type="molecule type" value="mRNA"/>
</dbReference>
<dbReference type="EMBL" id="AB011136">
    <property type="protein sequence ID" value="BAA25490.1"/>
    <property type="molecule type" value="mRNA"/>
</dbReference>
<dbReference type="EMBL" id="AL834181">
    <property type="protein sequence ID" value="CAD38878.1"/>
    <property type="molecule type" value="mRNA"/>
</dbReference>
<dbReference type="CCDS" id="CCDS31963.1">
    <molecule id="A3KMH1-2"/>
</dbReference>
<dbReference type="CCDS" id="CCDS41881.1">
    <molecule id="A3KMH1-1"/>
</dbReference>
<dbReference type="PIR" id="T00335">
    <property type="entry name" value="T00335"/>
</dbReference>
<dbReference type="RefSeq" id="NP_001009814.1">
    <molecule id="A3KMH1-2"/>
    <property type="nucleotide sequence ID" value="NM_001009814.2"/>
</dbReference>
<dbReference type="RefSeq" id="NP_055873.1">
    <molecule id="A3KMH1-1"/>
    <property type="nucleotide sequence ID" value="NM_015058.2"/>
</dbReference>
<dbReference type="RefSeq" id="XP_016875963.1">
    <property type="nucleotide sequence ID" value="XM_017020474.1"/>
</dbReference>
<dbReference type="BioGRID" id="116710">
    <property type="interactions" value="358"/>
</dbReference>
<dbReference type="FunCoup" id="A3KMH1">
    <property type="interactions" value="2345"/>
</dbReference>
<dbReference type="IntAct" id="A3KMH1">
    <property type="interactions" value="106"/>
</dbReference>
<dbReference type="MINT" id="A3KMH1"/>
<dbReference type="STRING" id="9606.ENSP00000368612"/>
<dbReference type="GlyCosmos" id="A3KMH1">
    <property type="glycosylation" value="5 sites, No reported glycans"/>
</dbReference>
<dbReference type="GlyGen" id="A3KMH1">
    <property type="glycosylation" value="8 sites, 1 O-linked glycan (2 sites)"/>
</dbReference>
<dbReference type="iPTMnet" id="A3KMH1"/>
<dbReference type="PhosphoSitePlus" id="A3KMH1"/>
<dbReference type="SwissPalm" id="A3KMH1"/>
<dbReference type="BioMuta" id="VWA8"/>
<dbReference type="jPOST" id="A3KMH1"/>
<dbReference type="MassIVE" id="A3KMH1"/>
<dbReference type="PaxDb" id="9606-ENSP00000368612"/>
<dbReference type="PeptideAtlas" id="A3KMH1"/>
<dbReference type="ProteomicsDB" id="577">
    <molecule id="A3KMH1-1"/>
</dbReference>
<dbReference type="ProteomicsDB" id="578">
    <molecule id="A3KMH1-2"/>
</dbReference>
<dbReference type="ProteomicsDB" id="579">
    <molecule id="A3KMH1-3"/>
</dbReference>
<dbReference type="Pumba" id="A3KMH1"/>
<dbReference type="Antibodypedia" id="23432">
    <property type="antibodies" value="14 antibodies from 8 providers"/>
</dbReference>
<dbReference type="DNASU" id="23078"/>
<dbReference type="Ensembl" id="ENST00000281496.6">
    <molecule id="A3KMH1-2"/>
    <property type="protein sequence ID" value="ENSP00000281496.6"/>
    <property type="gene ID" value="ENSG00000102763.18"/>
</dbReference>
<dbReference type="Ensembl" id="ENST00000379310.8">
    <molecule id="A3KMH1-1"/>
    <property type="protein sequence ID" value="ENSP00000368612.3"/>
    <property type="gene ID" value="ENSG00000102763.18"/>
</dbReference>
<dbReference type="GeneID" id="23078"/>
<dbReference type="KEGG" id="hsa:23078"/>
<dbReference type="MANE-Select" id="ENST00000379310.8">
    <property type="protein sequence ID" value="ENSP00000368612.3"/>
    <property type="RefSeq nucleotide sequence ID" value="NM_015058.2"/>
    <property type="RefSeq protein sequence ID" value="NP_055873.1"/>
</dbReference>
<dbReference type="UCSC" id="uc001uyj.4">
    <molecule id="A3KMH1-1"/>
    <property type="organism name" value="human"/>
</dbReference>
<dbReference type="AGR" id="HGNC:29071"/>
<dbReference type="CTD" id="23078"/>
<dbReference type="DisGeNET" id="23078"/>
<dbReference type="GeneCards" id="VWA8"/>
<dbReference type="HGNC" id="HGNC:29071">
    <property type="gene designation" value="VWA8"/>
</dbReference>
<dbReference type="HPA" id="ENSG00000102763">
    <property type="expression patterns" value="Low tissue specificity"/>
</dbReference>
<dbReference type="MalaCards" id="VWA8"/>
<dbReference type="MIM" id="617509">
    <property type="type" value="gene"/>
</dbReference>
<dbReference type="MIM" id="620422">
    <property type="type" value="phenotype"/>
</dbReference>
<dbReference type="neXtProt" id="NX_A3KMH1"/>
<dbReference type="OpenTargets" id="ENSG00000102763"/>
<dbReference type="PharmGKB" id="PA162392941"/>
<dbReference type="VEuPathDB" id="HostDB:ENSG00000102763"/>
<dbReference type="eggNOG" id="KOG1808">
    <property type="taxonomic scope" value="Eukaryota"/>
</dbReference>
<dbReference type="GeneTree" id="ENSGT00390000006601"/>
<dbReference type="HOGENOM" id="CLU_001400_0_0_1"/>
<dbReference type="InParanoid" id="A3KMH1"/>
<dbReference type="OMA" id="GTHIVHP"/>
<dbReference type="OrthoDB" id="5186at2759"/>
<dbReference type="PAN-GO" id="A3KMH1">
    <property type="GO annotations" value="1 GO annotation based on evolutionary models"/>
</dbReference>
<dbReference type="PhylomeDB" id="A3KMH1"/>
<dbReference type="TreeFam" id="TF300317"/>
<dbReference type="PathwayCommons" id="A3KMH1"/>
<dbReference type="SignaLink" id="A3KMH1"/>
<dbReference type="BioGRID-ORCS" id="23078">
    <property type="hits" value="13 hits in 1155 CRISPR screens"/>
</dbReference>
<dbReference type="ChiTaRS" id="VWA8">
    <property type="organism name" value="human"/>
</dbReference>
<dbReference type="GenomeRNAi" id="23078"/>
<dbReference type="Pharos" id="A3KMH1">
    <property type="development level" value="Tdark"/>
</dbReference>
<dbReference type="PRO" id="PR:A3KMH1"/>
<dbReference type="Proteomes" id="UP000005640">
    <property type="component" value="Chromosome 13"/>
</dbReference>
<dbReference type="RNAct" id="A3KMH1">
    <property type="molecule type" value="protein"/>
</dbReference>
<dbReference type="Bgee" id="ENSG00000102763">
    <property type="expression patterns" value="Expressed in vastus lateralis and 200 other cell types or tissues"/>
</dbReference>
<dbReference type="GO" id="GO:0005737">
    <property type="term" value="C:cytoplasm"/>
    <property type="evidence" value="ECO:0000318"/>
    <property type="project" value="GO_Central"/>
</dbReference>
<dbReference type="GO" id="GO:0005739">
    <property type="term" value="C:mitochondrion"/>
    <property type="evidence" value="ECO:0000314"/>
    <property type="project" value="UniProtKB"/>
</dbReference>
<dbReference type="GO" id="GO:0005777">
    <property type="term" value="C:peroxisome"/>
    <property type="evidence" value="ECO:0000314"/>
    <property type="project" value="UniProtKB"/>
</dbReference>
<dbReference type="GO" id="GO:0005524">
    <property type="term" value="F:ATP binding"/>
    <property type="evidence" value="ECO:0007669"/>
    <property type="project" value="UniProtKB-KW"/>
</dbReference>
<dbReference type="GO" id="GO:0016887">
    <property type="term" value="F:ATP hydrolysis activity"/>
    <property type="evidence" value="ECO:0000250"/>
    <property type="project" value="UniProtKB"/>
</dbReference>
<dbReference type="CDD" id="cd01455">
    <property type="entry name" value="vWA_F11C1-5a_type"/>
    <property type="match status" value="1"/>
</dbReference>
<dbReference type="FunFam" id="3.40.50.300:FF:000587">
    <property type="entry name" value="von Willebrand factor A domain containing 8"/>
    <property type="match status" value="1"/>
</dbReference>
<dbReference type="FunFam" id="3.40.50.300:FF:000663">
    <property type="entry name" value="von Willebrand factor A domain containing 8"/>
    <property type="match status" value="1"/>
</dbReference>
<dbReference type="FunFam" id="3.40.50.300:FF:000989">
    <property type="entry name" value="von Willebrand factor A domain containing 8"/>
    <property type="match status" value="1"/>
</dbReference>
<dbReference type="FunFam" id="3.40.50.410:FF:000049">
    <property type="entry name" value="von Willebrand factor A domain containing 8"/>
    <property type="match status" value="1"/>
</dbReference>
<dbReference type="Gene3D" id="3.40.50.300">
    <property type="entry name" value="P-loop containing nucleotide triphosphate hydrolases"/>
    <property type="match status" value="3"/>
</dbReference>
<dbReference type="Gene3D" id="3.40.50.410">
    <property type="entry name" value="von Willebrand factor, type A domain"/>
    <property type="match status" value="1"/>
</dbReference>
<dbReference type="InterPro" id="IPR003593">
    <property type="entry name" value="AAA+_ATPase"/>
</dbReference>
<dbReference type="InterPro" id="IPR011704">
    <property type="entry name" value="ATPase_dyneun-rel_AAA"/>
</dbReference>
<dbReference type="InterPro" id="IPR027417">
    <property type="entry name" value="P-loop_NTPase"/>
</dbReference>
<dbReference type="InterPro" id="IPR039891">
    <property type="entry name" value="VWA8"/>
</dbReference>
<dbReference type="InterPro" id="IPR002035">
    <property type="entry name" value="VWF_A"/>
</dbReference>
<dbReference type="InterPro" id="IPR036465">
    <property type="entry name" value="vWFA_dom_sf"/>
</dbReference>
<dbReference type="PANTHER" id="PTHR21610">
    <property type="entry name" value="VON WILLEBRAND FACTOR A DOMAIN-CONTAINING PROTEIN 8"/>
    <property type="match status" value="1"/>
</dbReference>
<dbReference type="PANTHER" id="PTHR21610:SF9">
    <property type="entry name" value="VON WILLEBRAND FACTOR A DOMAIN-CONTAINING PROTEIN 8"/>
    <property type="match status" value="1"/>
</dbReference>
<dbReference type="Pfam" id="PF07728">
    <property type="entry name" value="AAA_5"/>
    <property type="match status" value="3"/>
</dbReference>
<dbReference type="SMART" id="SM00382">
    <property type="entry name" value="AAA"/>
    <property type="match status" value="2"/>
</dbReference>
<dbReference type="SMART" id="SM00327">
    <property type="entry name" value="VWA"/>
    <property type="match status" value="1"/>
</dbReference>
<dbReference type="SUPFAM" id="SSF52540">
    <property type="entry name" value="P-loop containing nucleoside triphosphate hydrolases"/>
    <property type="match status" value="3"/>
</dbReference>
<dbReference type="SUPFAM" id="SSF53300">
    <property type="entry name" value="vWA-like"/>
    <property type="match status" value="1"/>
</dbReference>
<dbReference type="PROSITE" id="PS50234">
    <property type="entry name" value="VWFA"/>
    <property type="match status" value="1"/>
</dbReference>
<comment type="function">
    <text evidence="1">Exhibits ATPase activity in vitro.</text>
</comment>
<comment type="subunit">
    <text evidence="6">Monomer (PubMed:30204880). Isoform 1 and isoform 2 interact with PEX7 (PubMed:30204880). Isoform 2 interacts with isoform 1 of PEX5 in a PEX7-dependent manner (PubMed:30204880).</text>
</comment>
<comment type="subcellular location">
    <molecule>Isoform 1</molecule>
    <subcellularLocation>
        <location evidence="6">Mitochondrion</location>
    </subcellularLocation>
</comment>
<comment type="subcellular location">
    <molecule>Isoform 2</molecule>
    <subcellularLocation>
        <location evidence="6">Mitochondrion</location>
    </subcellularLocation>
    <subcellularLocation>
        <location evidence="6">Peroxisome</location>
    </subcellularLocation>
    <text evidence="6">Localizes to peroxisomes in a PEX7-dependent manner.</text>
</comment>
<comment type="alternative products">
    <event type="alternative splicing"/>
    <isoform>
        <id>A3KMH1-1</id>
        <name>1</name>
        <name evidence="10">P7BP2L</name>
        <sequence type="displayed"/>
    </isoform>
    <isoform>
        <id>A3KMH1-2</id>
        <name>2</name>
        <name evidence="10">P7BP2S</name>
        <sequence type="described" ref="VSP_034533"/>
    </isoform>
    <isoform>
        <id>A3KMH1-3</id>
        <name>3</name>
        <sequence type="described" ref="VSP_061575"/>
    </isoform>
</comment>
<comment type="tissue specificity">
    <text evidence="7">In fetal eye, it is highly expressed in the retina while expression is low in the cornea, sclera and lens.</text>
</comment>
<comment type="disease" evidence="7">
    <disease id="DI-06704">
        <name>Retinitis pigmentosa 97</name>
        <acronym>RP97</acronym>
        <description>An autosomal dominant form of retinitis pigmentosa, a retinal dystrophy belonging to the group of pigmentary retinopathies. Retinitis pigmentosa is characterized by retinal pigment deposits visible on fundus examination and primary loss of rod photoreceptor cells followed by secondary loss of cone photoreceptors. Patients typically have night vision blindness and loss of midperipheral visual field. RP97 is characterized by onset of night blindness and visual field defects in the first decade of life.</description>
        <dbReference type="MIM" id="620422"/>
    </disease>
    <text>The disease may be caused by variants affecting the gene represented in this entry.</text>
</comment>
<comment type="miscellaneous">
    <molecule>Isoform 2</molecule>
    <text evidence="6">AA 66-79 are essential for peroxisome localization.</text>
</comment>
<comment type="sequence caution" evidence="11">
    <conflict type="erroneous initiation">
        <sequence resource="EMBL-CDS" id="AAI31803"/>
    </conflict>
    <text>Extended N-terminus.</text>
</comment>
<keyword id="KW-0025">Alternative splicing</keyword>
<keyword id="KW-0067">ATP-binding</keyword>
<keyword id="KW-0225">Disease variant</keyword>
<keyword id="KW-0325">Glycoprotein</keyword>
<keyword id="KW-0496">Mitochondrion</keyword>
<keyword id="KW-0547">Nucleotide-binding</keyword>
<keyword id="KW-0576">Peroxisome</keyword>
<keyword id="KW-1267">Proteomics identification</keyword>
<keyword id="KW-1185">Reference proteome</keyword>
<keyword id="KW-0682">Retinitis pigmentosa</keyword>
<keyword id="KW-0809">Transit peptide</keyword>